<gene>
    <name type="ordered locus">Shewana3_2381</name>
</gene>
<feature type="chain" id="PRO_0000375377" description="YcgL domain-containing protein Shewana3_2381">
    <location>
        <begin position="1"/>
        <end position="92"/>
    </location>
</feature>
<feature type="domain" description="YcgL" evidence="1">
    <location>
        <begin position="1"/>
        <end position="85"/>
    </location>
</feature>
<protein>
    <recommendedName>
        <fullName evidence="1">YcgL domain-containing protein Shewana3_2381</fullName>
    </recommendedName>
</protein>
<evidence type="ECO:0000255" key="1">
    <source>
        <dbReference type="HAMAP-Rule" id="MF_01866"/>
    </source>
</evidence>
<proteinExistence type="inferred from homology"/>
<accession>A0KXU1</accession>
<organism>
    <name type="scientific">Shewanella sp. (strain ANA-3)</name>
    <dbReference type="NCBI Taxonomy" id="94122"/>
    <lineage>
        <taxon>Bacteria</taxon>
        <taxon>Pseudomonadati</taxon>
        <taxon>Pseudomonadota</taxon>
        <taxon>Gammaproteobacteria</taxon>
        <taxon>Alteromonadales</taxon>
        <taxon>Shewanellaceae</taxon>
        <taxon>Shewanella</taxon>
    </lineage>
</organism>
<name>Y2381_SHESA</name>
<sequence length="92" mass="10425">MLCAVYKSSRKADTYLFVNKRDCFDDVPQALLEMFGVPQLVMVFPIAKRESLGIADIQKVRAALEEKGFYLQIPPPQVNLLAEHRESLGIKD</sequence>
<dbReference type="EMBL" id="CP000469">
    <property type="protein sequence ID" value="ABK48610.1"/>
    <property type="molecule type" value="Genomic_DNA"/>
</dbReference>
<dbReference type="RefSeq" id="WP_011717311.1">
    <property type="nucleotide sequence ID" value="NC_008577.1"/>
</dbReference>
<dbReference type="SMR" id="A0KXU1"/>
<dbReference type="STRING" id="94122.Shewana3_2381"/>
<dbReference type="KEGG" id="shn:Shewana3_2381"/>
<dbReference type="eggNOG" id="COG3100">
    <property type="taxonomic scope" value="Bacteria"/>
</dbReference>
<dbReference type="HOGENOM" id="CLU_155118_1_0_6"/>
<dbReference type="OrthoDB" id="7062382at2"/>
<dbReference type="Proteomes" id="UP000002589">
    <property type="component" value="Chromosome"/>
</dbReference>
<dbReference type="Gene3D" id="3.10.510.20">
    <property type="entry name" value="YcgL domain"/>
    <property type="match status" value="1"/>
</dbReference>
<dbReference type="HAMAP" id="MF_01866">
    <property type="entry name" value="UPF0745"/>
    <property type="match status" value="1"/>
</dbReference>
<dbReference type="InterPro" id="IPR038068">
    <property type="entry name" value="YcgL-like_sf"/>
</dbReference>
<dbReference type="InterPro" id="IPR027354">
    <property type="entry name" value="YcgL_dom"/>
</dbReference>
<dbReference type="PANTHER" id="PTHR38109">
    <property type="entry name" value="PROTEIN YCGL"/>
    <property type="match status" value="1"/>
</dbReference>
<dbReference type="PANTHER" id="PTHR38109:SF1">
    <property type="entry name" value="PROTEIN YCGL"/>
    <property type="match status" value="1"/>
</dbReference>
<dbReference type="Pfam" id="PF05166">
    <property type="entry name" value="YcgL"/>
    <property type="match status" value="1"/>
</dbReference>
<dbReference type="SUPFAM" id="SSF160191">
    <property type="entry name" value="YcgL-like"/>
    <property type="match status" value="1"/>
</dbReference>
<dbReference type="PROSITE" id="PS51648">
    <property type="entry name" value="YCGL"/>
    <property type="match status" value="1"/>
</dbReference>
<reference key="1">
    <citation type="submission" date="2006-09" db="EMBL/GenBank/DDBJ databases">
        <title>Complete sequence of chromosome 1 of Shewanella sp. ANA-3.</title>
        <authorList>
            <person name="Copeland A."/>
            <person name="Lucas S."/>
            <person name="Lapidus A."/>
            <person name="Barry K."/>
            <person name="Detter J.C."/>
            <person name="Glavina del Rio T."/>
            <person name="Hammon N."/>
            <person name="Israni S."/>
            <person name="Dalin E."/>
            <person name="Tice H."/>
            <person name="Pitluck S."/>
            <person name="Chertkov O."/>
            <person name="Brettin T."/>
            <person name="Bruce D."/>
            <person name="Han C."/>
            <person name="Tapia R."/>
            <person name="Gilna P."/>
            <person name="Schmutz J."/>
            <person name="Larimer F."/>
            <person name="Land M."/>
            <person name="Hauser L."/>
            <person name="Kyrpides N."/>
            <person name="Kim E."/>
            <person name="Newman D."/>
            <person name="Salticov C."/>
            <person name="Konstantinidis K."/>
            <person name="Klappenback J."/>
            <person name="Tiedje J."/>
            <person name="Richardson P."/>
        </authorList>
    </citation>
    <scope>NUCLEOTIDE SEQUENCE [LARGE SCALE GENOMIC DNA]</scope>
    <source>
        <strain>ANA-3</strain>
    </source>
</reference>